<feature type="chain" id="PRO_0000455124" description="Golgi-associated RAB2 interactor protein 2">
    <location>
        <begin position="1"/>
        <end position="440"/>
    </location>
</feature>
<sequence>MMKKNRNKKAMNKQEALFIPHYYRLGHLKNILDGGEYAPYVSPPILESNFIQVNRRGESIYLHNRANWVTVGICSSNPIFKTPNMMLLAHLTPEARKEPEPLFKTLLKSSSSGTLVLTRFIPLQFVTLSVHSAKNMRLKVKLINGRSYYLQLCAPVYKQDIIFSQWVDLIPLLNQEKIKNTKVSEVSSLSELTNSTDIAGSMDITDITAFRELRPRHPKTHRYPCNIMESADFSEYTDVTDVTDVTDVTDMLDNGITDVQDIKIVTEVTEVTEVTEVTEVSEVSDVKMATNISGVKIVFENDDIIKTKQEEKEYTLKHRSLQDTKTKSDYQDSPNPVTMSNIALALQDEGCFQTTQTPVKSKEDIYKEICDETSEENMIRLQNIHLKATESRSTRTDSDISDGELKLGRYLHKQCSSREQSFIHSLGSLPRGFVFLHLLL</sequence>
<name>GAR2_MOUSE</name>
<proteinExistence type="evidence at protein level"/>
<protein>
    <recommendedName>
        <fullName evidence="3">Golgi-associated RAB2 interactor protein 2</fullName>
    </recommendedName>
</protein>
<evidence type="ECO:0000269" key="1">
    <source>
    </source>
</evidence>
<evidence type="ECO:0000305" key="2"/>
<evidence type="ECO:0000312" key="3">
    <source>
        <dbReference type="MGI" id="MGI:1918147"/>
    </source>
</evidence>
<accession>D3YV92</accession>
<organism>
    <name type="scientific">Mus musculus</name>
    <name type="common">Mouse</name>
    <dbReference type="NCBI Taxonomy" id="10090"/>
    <lineage>
        <taxon>Eukaryota</taxon>
        <taxon>Metazoa</taxon>
        <taxon>Chordata</taxon>
        <taxon>Craniata</taxon>
        <taxon>Vertebrata</taxon>
        <taxon>Euteleostomi</taxon>
        <taxon>Mammalia</taxon>
        <taxon>Eutheria</taxon>
        <taxon>Euarchontoglires</taxon>
        <taxon>Glires</taxon>
        <taxon>Rodentia</taxon>
        <taxon>Myomorpha</taxon>
        <taxon>Muroidea</taxon>
        <taxon>Muridae</taxon>
        <taxon>Murinae</taxon>
        <taxon>Mus</taxon>
        <taxon>Mus</taxon>
    </lineage>
</organism>
<gene>
    <name evidence="3" type="primary">Garin2</name>
    <name evidence="3" type="synonym">Fam71d</name>
</gene>
<keyword id="KW-0966">Cell projection</keyword>
<keyword id="KW-0969">Cilium</keyword>
<keyword id="KW-0282">Flagellum</keyword>
<keyword id="KW-1185">Reference proteome</keyword>
<reference key="1">
    <citation type="journal article" date="2009" name="PLoS Biol.">
        <title>Lineage-specific biology revealed by a finished genome assembly of the mouse.</title>
        <authorList>
            <person name="Church D.M."/>
            <person name="Goodstadt L."/>
            <person name="Hillier L.W."/>
            <person name="Zody M.C."/>
            <person name="Goldstein S."/>
            <person name="She X."/>
            <person name="Bult C.J."/>
            <person name="Agarwala R."/>
            <person name="Cherry J.L."/>
            <person name="DiCuccio M."/>
            <person name="Hlavina W."/>
            <person name="Kapustin Y."/>
            <person name="Meric P."/>
            <person name="Maglott D."/>
            <person name="Birtle Z."/>
            <person name="Marques A.C."/>
            <person name="Graves T."/>
            <person name="Zhou S."/>
            <person name="Teague B."/>
            <person name="Potamousis K."/>
            <person name="Churas C."/>
            <person name="Place M."/>
            <person name="Herschleb J."/>
            <person name="Runnheim R."/>
            <person name="Forrest D."/>
            <person name="Amos-Landgraf J."/>
            <person name="Schwartz D.C."/>
            <person name="Cheng Z."/>
            <person name="Lindblad-Toh K."/>
            <person name="Eichler E.E."/>
            <person name="Ponting C.P."/>
        </authorList>
    </citation>
    <scope>NUCLEOTIDE SEQUENCE [LARGE SCALE GENOMIC DNA]</scope>
    <source>
        <strain>C57BL/6J</strain>
    </source>
</reference>
<reference key="2">
    <citation type="journal article" date="2017" name="Hum. Reprod.">
        <title>The expression characteristics of FAM71D and its association with sperm motility.</title>
        <authorList>
            <person name="Ma Q."/>
            <person name="Li Y."/>
            <person name="Luo M."/>
            <person name="Guo H."/>
            <person name="Lin S."/>
            <person name="Chen J."/>
            <person name="Du Y."/>
            <person name="Jiang Z."/>
            <person name="Gui Y."/>
        </authorList>
    </citation>
    <scope>FUNCTION</scope>
    <scope>TISSUE SPECIFICITY</scope>
    <scope>SUBCELLULAR LOCATION</scope>
    <scope>DEVELOPMENTAL STAGE</scope>
    <scope>INTERACTION WITH CALM1</scope>
</reference>
<comment type="function">
    <text evidence="1">Seems to play a role in sperm motility.</text>
</comment>
<comment type="subunit">
    <text evidence="1">Interacts with CALM1.</text>
</comment>
<comment type="subcellular location">
    <subcellularLocation>
        <location evidence="1">Cell projection</location>
        <location evidence="1">Cilium</location>
        <location evidence="1">Flagellum</location>
    </subcellularLocation>
    <text evidence="1">In mature sperm, localizes in the midpiece of flagella.</text>
</comment>
<comment type="tissue specificity">
    <text evidence="1">Expressed in testis (at protein level).</text>
</comment>
<comment type="developmental stage">
    <text evidence="1">Expression increases from 3 weeks to 6 months (PubMed:29025071). In mouse testis, mainly localized in the cytoplasm of round spermatids and elongated spermatids. In the cap phase, remains close to the acrosomes but begins to migrate to other regions around the nuclei. As spermiogenesis progresses, further separates from the acrosomes. In the acrosome phase, while the acrosomes formed hook-like structures and move toward one end of the nuclei, GARIN2 moveS to the opposite end. In the maturation phase, moves to the end opposite to the acrosomes and, at the end of spermiogenesis, is removed to the residue body together with most of the other cytosolic components. Finally, in caudal sperm, is retained in sperm flagella. In mature sperm, GARIN2 localizes in the midpiece of flagella (PubMed:29025071).</text>
</comment>
<comment type="similarity">
    <text evidence="2">Belongs to the GARIN family.</text>
</comment>
<dbReference type="CCDS" id="CCDS49096.1"/>
<dbReference type="RefSeq" id="NP_083345.1">
    <property type="nucleotide sequence ID" value="NM_029069.2"/>
</dbReference>
<dbReference type="RefSeq" id="XP_006516290.1">
    <property type="nucleotide sequence ID" value="XM_006516227.3"/>
</dbReference>
<dbReference type="RefSeq" id="XP_011242474.1">
    <property type="nucleotide sequence ID" value="XM_011244172.2"/>
</dbReference>
<dbReference type="RefSeq" id="XP_011242475.1">
    <property type="nucleotide sequence ID" value="XM_011244173.2"/>
</dbReference>
<dbReference type="RefSeq" id="XP_017170684.1">
    <property type="nucleotide sequence ID" value="XM_017315195.2"/>
</dbReference>
<dbReference type="RefSeq" id="XP_017170685.1">
    <property type="nucleotide sequence ID" value="XM_017315196.2"/>
</dbReference>
<dbReference type="FunCoup" id="D3YV92">
    <property type="interactions" value="12"/>
</dbReference>
<dbReference type="STRING" id="10090.ENSMUSP00000077119"/>
<dbReference type="GlyGen" id="D3YV92">
    <property type="glycosylation" value="1 site"/>
</dbReference>
<dbReference type="iPTMnet" id="D3YV92"/>
<dbReference type="PhosphoSitePlus" id="D3YV92"/>
<dbReference type="jPOST" id="D3YV92"/>
<dbReference type="PaxDb" id="10090-ENSMUSP00000077119"/>
<dbReference type="ProteomicsDB" id="332720"/>
<dbReference type="Antibodypedia" id="68">
    <property type="antibodies" value="36 antibodies from 11 providers"/>
</dbReference>
<dbReference type="DNASU" id="70897"/>
<dbReference type="Ensembl" id="ENSMUST00000077968.5">
    <property type="protein sequence ID" value="ENSMUSP00000077119.5"/>
    <property type="gene ID" value="ENSMUSG00000056987.9"/>
</dbReference>
<dbReference type="GeneID" id="70897"/>
<dbReference type="KEGG" id="mmu:70897"/>
<dbReference type="UCSC" id="uc007nzf.2">
    <property type="organism name" value="mouse"/>
</dbReference>
<dbReference type="AGR" id="MGI:1918147"/>
<dbReference type="CTD" id="161142"/>
<dbReference type="MGI" id="MGI:1918147">
    <property type="gene designation" value="Garin2"/>
</dbReference>
<dbReference type="VEuPathDB" id="HostDB:ENSMUSG00000056987"/>
<dbReference type="eggNOG" id="ENOG502S1VC">
    <property type="taxonomic scope" value="Eukaryota"/>
</dbReference>
<dbReference type="GeneTree" id="ENSGT00940000161537"/>
<dbReference type="HOGENOM" id="CLU_055234_0_0_1"/>
<dbReference type="InParanoid" id="D3YV92"/>
<dbReference type="OMA" id="HKTPNVM"/>
<dbReference type="OrthoDB" id="9445880at2759"/>
<dbReference type="PhylomeDB" id="D3YV92"/>
<dbReference type="TreeFam" id="TF336050"/>
<dbReference type="BioGRID-ORCS" id="70897">
    <property type="hits" value="2 hits in 76 CRISPR screens"/>
</dbReference>
<dbReference type="PRO" id="PR:D3YV92"/>
<dbReference type="Proteomes" id="UP000000589">
    <property type="component" value="Chromosome 12"/>
</dbReference>
<dbReference type="RNAct" id="D3YV92">
    <property type="molecule type" value="protein"/>
</dbReference>
<dbReference type="Bgee" id="ENSMUSG00000056987">
    <property type="expression patterns" value="Expressed in spermatid and 45 other cell types or tissues"/>
</dbReference>
<dbReference type="ExpressionAtlas" id="D3YV92">
    <property type="expression patterns" value="baseline and differential"/>
</dbReference>
<dbReference type="GO" id="GO:0061827">
    <property type="term" value="C:sperm head"/>
    <property type="evidence" value="ECO:0000315"/>
    <property type="project" value="MGI"/>
</dbReference>
<dbReference type="GO" id="GO:0097225">
    <property type="term" value="C:sperm midpiece"/>
    <property type="evidence" value="ECO:0000314"/>
    <property type="project" value="UniProtKB"/>
</dbReference>
<dbReference type="GO" id="GO:0000902">
    <property type="term" value="P:cell morphogenesis"/>
    <property type="evidence" value="ECO:0000315"/>
    <property type="project" value="MGI"/>
</dbReference>
<dbReference type="GO" id="GO:0030317">
    <property type="term" value="P:flagellated sperm motility"/>
    <property type="evidence" value="ECO:0000314"/>
    <property type="project" value="UniProtKB"/>
</dbReference>
<dbReference type="GO" id="GO:0007341">
    <property type="term" value="P:penetration of zona pellucida"/>
    <property type="evidence" value="ECO:0000315"/>
    <property type="project" value="MGI"/>
</dbReference>
<dbReference type="GO" id="GO:0007286">
    <property type="term" value="P:spermatid development"/>
    <property type="evidence" value="ECO:0000270"/>
    <property type="project" value="MGI"/>
</dbReference>
<dbReference type="InterPro" id="IPR022168">
    <property type="entry name" value="GARIL-like_Rab2B-bd"/>
</dbReference>
<dbReference type="PANTHER" id="PTHR22574">
    <property type="match status" value="1"/>
</dbReference>
<dbReference type="PANTHER" id="PTHR22574:SF6">
    <property type="entry name" value="GOLGI-ASSOCIATED RAB2 INTERACTOR PROTEIN 2"/>
    <property type="match status" value="1"/>
</dbReference>
<dbReference type="Pfam" id="PF12480">
    <property type="entry name" value="GARIL_Rab2_bd"/>
    <property type="match status" value="1"/>
</dbReference>